<sequence length="101" mass="10917">MFVKKGDKVRVIAGKDKGTEAVVLKALPKVNKVIVEGVGMIKKHQKPNTENPQGAIVEKEAPIHVSNVQVLDKNGVAGRVGYKVVDGKKVRYSKKSGEVLD</sequence>
<name>RL24_STRP3</name>
<feature type="chain" id="PRO_0000130732" description="Large ribosomal subunit protein uL24">
    <location>
        <begin position="1"/>
        <end position="101"/>
    </location>
</feature>
<accession>P0DE26</accession>
<accession>P60737</accession>
<accession>Q8P2Z5</accession>
<gene>
    <name evidence="1" type="primary">rplX</name>
    <name type="ordered locus">SpyM3_0051</name>
</gene>
<proteinExistence type="inferred from homology"/>
<comment type="function">
    <text evidence="1">One of two assembly initiator proteins, it binds directly to the 5'-end of the 23S rRNA, where it nucleates assembly of the 50S subunit.</text>
</comment>
<comment type="function">
    <text evidence="1">One of the proteins that surrounds the polypeptide exit tunnel on the outside of the subunit.</text>
</comment>
<comment type="subunit">
    <text evidence="1">Part of the 50S ribosomal subunit.</text>
</comment>
<comment type="similarity">
    <text evidence="1">Belongs to the universal ribosomal protein uL24 family.</text>
</comment>
<reference key="1">
    <citation type="journal article" date="2002" name="Proc. Natl. Acad. Sci. U.S.A.">
        <title>Genome sequence of a serotype M3 strain of group A Streptococcus: phage-encoded toxins, the high-virulence phenotype, and clone emergence.</title>
        <authorList>
            <person name="Beres S.B."/>
            <person name="Sylva G.L."/>
            <person name="Barbian K.D."/>
            <person name="Lei B."/>
            <person name="Hoff J.S."/>
            <person name="Mammarella N.D."/>
            <person name="Liu M.-Y."/>
            <person name="Smoot J.C."/>
            <person name="Porcella S.F."/>
            <person name="Parkins L.D."/>
            <person name="Campbell D.S."/>
            <person name="Smith T.M."/>
            <person name="McCormick J.K."/>
            <person name="Leung D.Y.M."/>
            <person name="Schlievert P.M."/>
            <person name="Musser J.M."/>
        </authorList>
    </citation>
    <scope>NUCLEOTIDE SEQUENCE [LARGE SCALE GENOMIC DNA]</scope>
    <source>
        <strain>ATCC BAA-595 / MGAS315</strain>
    </source>
</reference>
<protein>
    <recommendedName>
        <fullName evidence="1">Large ribosomal subunit protein uL24</fullName>
    </recommendedName>
    <alternativeName>
        <fullName evidence="2">50S ribosomal protein L24</fullName>
    </alternativeName>
</protein>
<keyword id="KW-0687">Ribonucleoprotein</keyword>
<keyword id="KW-0689">Ribosomal protein</keyword>
<keyword id="KW-0694">RNA-binding</keyword>
<keyword id="KW-0699">rRNA-binding</keyword>
<evidence type="ECO:0000255" key="1">
    <source>
        <dbReference type="HAMAP-Rule" id="MF_01326"/>
    </source>
</evidence>
<evidence type="ECO:0000305" key="2"/>
<dbReference type="EMBL" id="AE014074">
    <property type="protein sequence ID" value="AAM78658.1"/>
    <property type="molecule type" value="Genomic_DNA"/>
</dbReference>
<dbReference type="RefSeq" id="WP_002986636.1">
    <property type="nucleotide sequence ID" value="NC_004070.1"/>
</dbReference>
<dbReference type="SMR" id="P0DE26"/>
<dbReference type="GeneID" id="69900037"/>
<dbReference type="KEGG" id="spg:SpyM3_0051"/>
<dbReference type="HOGENOM" id="CLU_093315_2_0_9"/>
<dbReference type="Proteomes" id="UP000000564">
    <property type="component" value="Chromosome"/>
</dbReference>
<dbReference type="GO" id="GO:1990904">
    <property type="term" value="C:ribonucleoprotein complex"/>
    <property type="evidence" value="ECO:0007669"/>
    <property type="project" value="UniProtKB-KW"/>
</dbReference>
<dbReference type="GO" id="GO:0005840">
    <property type="term" value="C:ribosome"/>
    <property type="evidence" value="ECO:0007669"/>
    <property type="project" value="UniProtKB-KW"/>
</dbReference>
<dbReference type="GO" id="GO:0019843">
    <property type="term" value="F:rRNA binding"/>
    <property type="evidence" value="ECO:0007669"/>
    <property type="project" value="UniProtKB-UniRule"/>
</dbReference>
<dbReference type="GO" id="GO:0003735">
    <property type="term" value="F:structural constituent of ribosome"/>
    <property type="evidence" value="ECO:0007669"/>
    <property type="project" value="InterPro"/>
</dbReference>
<dbReference type="GO" id="GO:0006412">
    <property type="term" value="P:translation"/>
    <property type="evidence" value="ECO:0007669"/>
    <property type="project" value="UniProtKB-UniRule"/>
</dbReference>
<dbReference type="CDD" id="cd06089">
    <property type="entry name" value="KOW_RPL26"/>
    <property type="match status" value="1"/>
</dbReference>
<dbReference type="FunFam" id="2.30.30.30:FF:000004">
    <property type="entry name" value="50S ribosomal protein L24"/>
    <property type="match status" value="1"/>
</dbReference>
<dbReference type="Gene3D" id="2.30.30.30">
    <property type="match status" value="1"/>
</dbReference>
<dbReference type="HAMAP" id="MF_01326_B">
    <property type="entry name" value="Ribosomal_uL24_B"/>
    <property type="match status" value="1"/>
</dbReference>
<dbReference type="InterPro" id="IPR005824">
    <property type="entry name" value="KOW"/>
</dbReference>
<dbReference type="InterPro" id="IPR014722">
    <property type="entry name" value="Rib_uL2_dom2"/>
</dbReference>
<dbReference type="InterPro" id="IPR003256">
    <property type="entry name" value="Ribosomal_uL24"/>
</dbReference>
<dbReference type="InterPro" id="IPR005825">
    <property type="entry name" value="Ribosomal_uL24_CS"/>
</dbReference>
<dbReference type="InterPro" id="IPR041988">
    <property type="entry name" value="Ribosomal_uL24_KOW"/>
</dbReference>
<dbReference type="InterPro" id="IPR008991">
    <property type="entry name" value="Translation_prot_SH3-like_sf"/>
</dbReference>
<dbReference type="NCBIfam" id="TIGR01079">
    <property type="entry name" value="rplX_bact"/>
    <property type="match status" value="1"/>
</dbReference>
<dbReference type="PANTHER" id="PTHR12903">
    <property type="entry name" value="MITOCHONDRIAL RIBOSOMAL PROTEIN L24"/>
    <property type="match status" value="1"/>
</dbReference>
<dbReference type="Pfam" id="PF00467">
    <property type="entry name" value="KOW"/>
    <property type="match status" value="1"/>
</dbReference>
<dbReference type="Pfam" id="PF17136">
    <property type="entry name" value="ribosomal_L24"/>
    <property type="match status" value="1"/>
</dbReference>
<dbReference type="SMART" id="SM00739">
    <property type="entry name" value="KOW"/>
    <property type="match status" value="1"/>
</dbReference>
<dbReference type="SUPFAM" id="SSF50104">
    <property type="entry name" value="Translation proteins SH3-like domain"/>
    <property type="match status" value="1"/>
</dbReference>
<dbReference type="PROSITE" id="PS01108">
    <property type="entry name" value="RIBOSOMAL_L24"/>
    <property type="match status" value="1"/>
</dbReference>
<organism>
    <name type="scientific">Streptococcus pyogenes serotype M3 (strain ATCC BAA-595 / MGAS315)</name>
    <dbReference type="NCBI Taxonomy" id="198466"/>
    <lineage>
        <taxon>Bacteria</taxon>
        <taxon>Bacillati</taxon>
        <taxon>Bacillota</taxon>
        <taxon>Bacilli</taxon>
        <taxon>Lactobacillales</taxon>
        <taxon>Streptococcaceae</taxon>
        <taxon>Streptococcus</taxon>
    </lineage>
</organism>